<organism>
    <name type="scientific">Chlorobium chlorochromatii (strain CaD3)</name>
    <dbReference type="NCBI Taxonomy" id="340177"/>
    <lineage>
        <taxon>Bacteria</taxon>
        <taxon>Pseudomonadati</taxon>
        <taxon>Chlorobiota</taxon>
        <taxon>Chlorobiia</taxon>
        <taxon>Chlorobiales</taxon>
        <taxon>Chlorobiaceae</taxon>
        <taxon>Chlorobium/Pelodictyon group</taxon>
        <taxon>Chlorobium</taxon>
    </lineage>
</organism>
<protein>
    <recommendedName>
        <fullName evidence="2">ATP synthase subunit alpha</fullName>
        <ecNumber evidence="2">7.1.2.2</ecNumber>
    </recommendedName>
    <alternativeName>
        <fullName evidence="2">ATP synthase F1 sector subunit alpha</fullName>
    </alternativeName>
    <alternativeName>
        <fullName evidence="2">F-ATPase subunit alpha</fullName>
    </alternativeName>
</protein>
<accession>Q3AUA7</accession>
<name>ATPA_CHLCH</name>
<reference key="1">
    <citation type="submission" date="2005-08" db="EMBL/GenBank/DDBJ databases">
        <title>Complete sequence of Chlorobium chlorochromatii CaD3.</title>
        <authorList>
            <consortium name="US DOE Joint Genome Institute"/>
            <person name="Copeland A."/>
            <person name="Lucas S."/>
            <person name="Lapidus A."/>
            <person name="Barry K."/>
            <person name="Detter J.C."/>
            <person name="Glavina T."/>
            <person name="Hammon N."/>
            <person name="Israni S."/>
            <person name="Pitluck S."/>
            <person name="Bryant D."/>
            <person name="Schmutz J."/>
            <person name="Larimer F."/>
            <person name="Land M."/>
            <person name="Kyrpides N."/>
            <person name="Ivanova N."/>
            <person name="Richardson P."/>
        </authorList>
    </citation>
    <scope>NUCLEOTIDE SEQUENCE [LARGE SCALE GENOMIC DNA]</scope>
    <source>
        <strain>CaD3</strain>
    </source>
</reference>
<comment type="function">
    <text evidence="2">Produces ATP from ADP in the presence of a proton gradient across the membrane. The alpha chain is a regulatory subunit.</text>
</comment>
<comment type="catalytic activity">
    <reaction evidence="2">
        <text>ATP + H2O + 4 H(+)(in) = ADP + phosphate + 5 H(+)(out)</text>
        <dbReference type="Rhea" id="RHEA:57720"/>
        <dbReference type="ChEBI" id="CHEBI:15377"/>
        <dbReference type="ChEBI" id="CHEBI:15378"/>
        <dbReference type="ChEBI" id="CHEBI:30616"/>
        <dbReference type="ChEBI" id="CHEBI:43474"/>
        <dbReference type="ChEBI" id="CHEBI:456216"/>
        <dbReference type="EC" id="7.1.2.2"/>
    </reaction>
</comment>
<comment type="subunit">
    <text evidence="1">F-type ATPases have 2 components, CF(1) - the catalytic core - and CF(0) - the membrane proton channel. CF(1) has five subunits: alpha(3), beta(3), gamma(1), delta(1), epsilon(1). CF(0) has four main subunits: a(1), b(1), b'(1) and c(9-12) (By similarity).</text>
</comment>
<comment type="subcellular location">
    <subcellularLocation>
        <location evidence="2">Cell inner membrane</location>
        <topology evidence="2">Peripheral membrane protein</topology>
    </subcellularLocation>
</comment>
<comment type="similarity">
    <text evidence="2">Belongs to the ATPase alpha/beta chains family.</text>
</comment>
<dbReference type="EC" id="7.1.2.2" evidence="2"/>
<dbReference type="EMBL" id="CP000108">
    <property type="protein sequence ID" value="ABB27418.1"/>
    <property type="molecule type" value="Genomic_DNA"/>
</dbReference>
<dbReference type="SMR" id="Q3AUA7"/>
<dbReference type="STRING" id="340177.Cag_0140"/>
<dbReference type="KEGG" id="cch:Cag_0140"/>
<dbReference type="eggNOG" id="COG0056">
    <property type="taxonomic scope" value="Bacteria"/>
</dbReference>
<dbReference type="HOGENOM" id="CLU_010091_2_1_10"/>
<dbReference type="OrthoDB" id="9803053at2"/>
<dbReference type="GO" id="GO:0005886">
    <property type="term" value="C:plasma membrane"/>
    <property type="evidence" value="ECO:0007669"/>
    <property type="project" value="UniProtKB-SubCell"/>
</dbReference>
<dbReference type="GO" id="GO:0045259">
    <property type="term" value="C:proton-transporting ATP synthase complex"/>
    <property type="evidence" value="ECO:0007669"/>
    <property type="project" value="UniProtKB-KW"/>
</dbReference>
<dbReference type="GO" id="GO:0043531">
    <property type="term" value="F:ADP binding"/>
    <property type="evidence" value="ECO:0007669"/>
    <property type="project" value="TreeGrafter"/>
</dbReference>
<dbReference type="GO" id="GO:0005524">
    <property type="term" value="F:ATP binding"/>
    <property type="evidence" value="ECO:0007669"/>
    <property type="project" value="UniProtKB-UniRule"/>
</dbReference>
<dbReference type="GO" id="GO:0046933">
    <property type="term" value="F:proton-transporting ATP synthase activity, rotational mechanism"/>
    <property type="evidence" value="ECO:0007669"/>
    <property type="project" value="UniProtKB-UniRule"/>
</dbReference>
<dbReference type="CDD" id="cd18113">
    <property type="entry name" value="ATP-synt_F1_alpha_C"/>
    <property type="match status" value="1"/>
</dbReference>
<dbReference type="CDD" id="cd18116">
    <property type="entry name" value="ATP-synt_F1_alpha_N"/>
    <property type="match status" value="1"/>
</dbReference>
<dbReference type="CDD" id="cd01132">
    <property type="entry name" value="F1-ATPase_alpha_CD"/>
    <property type="match status" value="1"/>
</dbReference>
<dbReference type="FunFam" id="1.20.150.20:FF:000001">
    <property type="entry name" value="ATP synthase subunit alpha"/>
    <property type="match status" value="1"/>
</dbReference>
<dbReference type="FunFam" id="2.40.30.20:FF:000001">
    <property type="entry name" value="ATP synthase subunit alpha"/>
    <property type="match status" value="1"/>
</dbReference>
<dbReference type="FunFam" id="3.40.50.300:FF:000002">
    <property type="entry name" value="ATP synthase subunit alpha"/>
    <property type="match status" value="1"/>
</dbReference>
<dbReference type="Gene3D" id="2.40.30.20">
    <property type="match status" value="1"/>
</dbReference>
<dbReference type="Gene3D" id="1.20.150.20">
    <property type="entry name" value="ATP synthase alpha/beta chain, C-terminal domain"/>
    <property type="match status" value="1"/>
</dbReference>
<dbReference type="Gene3D" id="3.40.50.300">
    <property type="entry name" value="P-loop containing nucleotide triphosphate hydrolases"/>
    <property type="match status" value="1"/>
</dbReference>
<dbReference type="HAMAP" id="MF_01346">
    <property type="entry name" value="ATP_synth_alpha_bact"/>
    <property type="match status" value="1"/>
</dbReference>
<dbReference type="InterPro" id="IPR023366">
    <property type="entry name" value="ATP_synth_asu-like_sf"/>
</dbReference>
<dbReference type="InterPro" id="IPR000793">
    <property type="entry name" value="ATP_synth_asu_C"/>
</dbReference>
<dbReference type="InterPro" id="IPR038376">
    <property type="entry name" value="ATP_synth_asu_C_sf"/>
</dbReference>
<dbReference type="InterPro" id="IPR033732">
    <property type="entry name" value="ATP_synth_F1_a_nt-bd_dom"/>
</dbReference>
<dbReference type="InterPro" id="IPR005294">
    <property type="entry name" value="ATP_synth_F1_asu"/>
</dbReference>
<dbReference type="InterPro" id="IPR020003">
    <property type="entry name" value="ATPase_a/bsu_AS"/>
</dbReference>
<dbReference type="InterPro" id="IPR004100">
    <property type="entry name" value="ATPase_F1/V1/A1_a/bsu_N"/>
</dbReference>
<dbReference type="InterPro" id="IPR036121">
    <property type="entry name" value="ATPase_F1/V1/A1_a/bsu_N_sf"/>
</dbReference>
<dbReference type="InterPro" id="IPR000194">
    <property type="entry name" value="ATPase_F1/V1/A1_a/bsu_nucl-bd"/>
</dbReference>
<dbReference type="InterPro" id="IPR027417">
    <property type="entry name" value="P-loop_NTPase"/>
</dbReference>
<dbReference type="NCBIfam" id="TIGR00962">
    <property type="entry name" value="atpA"/>
    <property type="match status" value="1"/>
</dbReference>
<dbReference type="NCBIfam" id="NF009884">
    <property type="entry name" value="PRK13343.1"/>
    <property type="match status" value="1"/>
</dbReference>
<dbReference type="PANTHER" id="PTHR48082">
    <property type="entry name" value="ATP SYNTHASE SUBUNIT ALPHA, MITOCHONDRIAL"/>
    <property type="match status" value="1"/>
</dbReference>
<dbReference type="PANTHER" id="PTHR48082:SF2">
    <property type="entry name" value="ATP SYNTHASE SUBUNIT ALPHA, MITOCHONDRIAL"/>
    <property type="match status" value="1"/>
</dbReference>
<dbReference type="Pfam" id="PF00006">
    <property type="entry name" value="ATP-synt_ab"/>
    <property type="match status" value="1"/>
</dbReference>
<dbReference type="Pfam" id="PF00306">
    <property type="entry name" value="ATP-synt_ab_C"/>
    <property type="match status" value="1"/>
</dbReference>
<dbReference type="Pfam" id="PF02874">
    <property type="entry name" value="ATP-synt_ab_N"/>
    <property type="match status" value="1"/>
</dbReference>
<dbReference type="PIRSF" id="PIRSF039088">
    <property type="entry name" value="F_ATPase_subunit_alpha"/>
    <property type="match status" value="1"/>
</dbReference>
<dbReference type="SUPFAM" id="SSF47917">
    <property type="entry name" value="C-terminal domain of alpha and beta subunits of F1 ATP synthase"/>
    <property type="match status" value="1"/>
</dbReference>
<dbReference type="SUPFAM" id="SSF50615">
    <property type="entry name" value="N-terminal domain of alpha and beta subunits of F1 ATP synthase"/>
    <property type="match status" value="1"/>
</dbReference>
<dbReference type="SUPFAM" id="SSF52540">
    <property type="entry name" value="P-loop containing nucleoside triphosphate hydrolases"/>
    <property type="match status" value="1"/>
</dbReference>
<dbReference type="PROSITE" id="PS00152">
    <property type="entry name" value="ATPASE_ALPHA_BETA"/>
    <property type="match status" value="1"/>
</dbReference>
<sequence length="526" mass="56759">MSTTVRPDEVSSILRKQLANFESEADVYDVGTVLQVGDGIARVYGLTKVAAGELLEFPNNVMGMALNLEEDNVGAVLFGESTMVKEGDTVKRSGILASIPVGEAMLGRVINPLGEPIDGKGPIDAKLRLPLERRAPGVIYRKSVHEPLQTGLKAIDAMIPVGRGQRELIIGDRQTGKTAVALDTIINQKGKGVFCIYVAIGLKGSTIAQVVSTLEKYDALSYTTVIAATASDPAPLQFIAPFAGATLGEYFRDTGRHALVIYDDLSKQAVSYRQVSLLLRRPPGREAYPGDVFYLHSRLLERAAKITDDVEVAKKMNDLPDALKPLVKGGGSLTALPIIETQAGDVSAYIPTNVISITDGQIFLESNLFNSGQRPAINVGISVSRVGGAAQIKAMKKIAGTLRLDLAQFRELEAFSKFGSDLDKTTKAQLDRGARLVEILKQGQYVPMPVEKQVAIIFVGTQGLLDSVDLKFIRKCEEEFLAMLEMKHADILSGIAEKGTLEADVASKLKDIATKFIATFKEKNKA</sequence>
<evidence type="ECO:0000250" key="1"/>
<evidence type="ECO:0000255" key="2">
    <source>
        <dbReference type="HAMAP-Rule" id="MF_01346"/>
    </source>
</evidence>
<feature type="chain" id="PRO_0000238230" description="ATP synthase subunit alpha">
    <location>
        <begin position="1"/>
        <end position="526"/>
    </location>
</feature>
<feature type="binding site" evidence="2">
    <location>
        <begin position="171"/>
        <end position="178"/>
    </location>
    <ligand>
        <name>ATP</name>
        <dbReference type="ChEBI" id="CHEBI:30616"/>
    </ligand>
</feature>
<feature type="site" description="Required for activity" evidence="2">
    <location>
        <position position="382"/>
    </location>
</feature>
<keyword id="KW-0066">ATP synthesis</keyword>
<keyword id="KW-0067">ATP-binding</keyword>
<keyword id="KW-0997">Cell inner membrane</keyword>
<keyword id="KW-1003">Cell membrane</keyword>
<keyword id="KW-0139">CF(1)</keyword>
<keyword id="KW-0375">Hydrogen ion transport</keyword>
<keyword id="KW-0406">Ion transport</keyword>
<keyword id="KW-0472">Membrane</keyword>
<keyword id="KW-0547">Nucleotide-binding</keyword>
<keyword id="KW-1278">Translocase</keyword>
<keyword id="KW-0813">Transport</keyword>
<proteinExistence type="inferred from homology"/>
<gene>
    <name evidence="2" type="primary">atpA</name>
    <name type="ordered locus">Cag_0140</name>
</gene>